<reference key="1">
    <citation type="journal article" date="2002" name="Proc. Natl. Acad. Sci. U.S.A.">
        <title>The genome sequence of the facultative intracellular pathogen Brucella melitensis.</title>
        <authorList>
            <person name="DelVecchio V.G."/>
            <person name="Kapatral V."/>
            <person name="Redkar R.J."/>
            <person name="Patra G."/>
            <person name="Mujer C."/>
            <person name="Los T."/>
            <person name="Ivanova N."/>
            <person name="Anderson I."/>
            <person name="Bhattacharyya A."/>
            <person name="Lykidis A."/>
            <person name="Reznik G."/>
            <person name="Jablonski L."/>
            <person name="Larsen N."/>
            <person name="D'Souza M."/>
            <person name="Bernal A."/>
            <person name="Mazur M."/>
            <person name="Goltsman E."/>
            <person name="Selkov E."/>
            <person name="Elzer P.H."/>
            <person name="Hagius S."/>
            <person name="O'Callaghan D."/>
            <person name="Letesson J.-J."/>
            <person name="Haselkorn R."/>
            <person name="Kyrpides N.C."/>
            <person name="Overbeek R."/>
        </authorList>
    </citation>
    <scope>NUCLEOTIDE SEQUENCE [LARGE SCALE GENOMIC DNA]</scope>
    <source>
        <strain>ATCC 23456 / CCUG 17765 / NCTC 10094 / 16M</strain>
    </source>
</reference>
<name>FUMC_BRUME</name>
<accession>Q8YB50</accession>
<evidence type="ECO:0000255" key="1">
    <source>
        <dbReference type="HAMAP-Rule" id="MF_00743"/>
    </source>
</evidence>
<evidence type="ECO:0000305" key="2"/>
<comment type="function">
    <text evidence="1">Involved in the TCA cycle. Catalyzes the stereospecific interconversion of fumarate to L-malate.</text>
</comment>
<comment type="catalytic activity">
    <reaction evidence="1">
        <text>(S)-malate = fumarate + H2O</text>
        <dbReference type="Rhea" id="RHEA:12460"/>
        <dbReference type="ChEBI" id="CHEBI:15377"/>
        <dbReference type="ChEBI" id="CHEBI:15589"/>
        <dbReference type="ChEBI" id="CHEBI:29806"/>
        <dbReference type="EC" id="4.2.1.2"/>
    </reaction>
</comment>
<comment type="pathway">
    <text evidence="1">Carbohydrate metabolism; tricarboxylic acid cycle; (S)-malate from fumarate: step 1/1.</text>
</comment>
<comment type="subunit">
    <text evidence="1">Homotetramer.</text>
</comment>
<comment type="subcellular location">
    <subcellularLocation>
        <location evidence="1">Cytoplasm</location>
    </subcellularLocation>
</comment>
<comment type="miscellaneous">
    <text evidence="1">There are 2 substrate-binding sites: the catalytic A site, and the non-catalytic B site that may play a role in the transfer of substrate or product between the active site and the solvent. Alternatively, the B site may bind allosteric effectors.</text>
</comment>
<comment type="similarity">
    <text evidence="1">Belongs to the class-II fumarase/aspartase family. Fumarase subfamily.</text>
</comment>
<comment type="sequence caution" evidence="2">
    <conflict type="erroneous initiation">
        <sequence resource="EMBL-CDS" id="AAL54293"/>
    </conflict>
    <text>Extended N-terminus.</text>
</comment>
<gene>
    <name evidence="1" type="primary">fumC</name>
    <name type="ordered locus">BMEII1051</name>
</gene>
<organism>
    <name type="scientific">Brucella melitensis biotype 1 (strain ATCC 23456 / CCUG 17765 / NCTC 10094 / 16M)</name>
    <dbReference type="NCBI Taxonomy" id="224914"/>
    <lineage>
        <taxon>Bacteria</taxon>
        <taxon>Pseudomonadati</taxon>
        <taxon>Pseudomonadota</taxon>
        <taxon>Alphaproteobacteria</taxon>
        <taxon>Hyphomicrobiales</taxon>
        <taxon>Brucellaceae</taxon>
        <taxon>Brucella/Ochrobactrum group</taxon>
        <taxon>Brucella</taxon>
    </lineage>
</organism>
<protein>
    <recommendedName>
        <fullName evidence="1">Fumarate hydratase class II</fullName>
        <shortName evidence="1">Fumarase C</shortName>
        <ecNumber evidence="1">4.2.1.2</ecNumber>
    </recommendedName>
    <alternativeName>
        <fullName evidence="1">Aerobic fumarase</fullName>
    </alternativeName>
    <alternativeName>
        <fullName evidence="1">Iron-independent fumarase</fullName>
    </alternativeName>
</protein>
<proteinExistence type="inferred from homology"/>
<sequence>MAATRTETDTFGPIDVPADRYWGAQTQRSLQNFRIGGERMPLPLVHALGVVKRAAAETNIALGKLDPVLGQVIAVAASEVIEGKLDDHFPLVVWQTGSGTQSNMNANEVISNRAIELLGGEMGSKKPIHPNDHVNMSQSSNDSFPTAIHIATAVETVNRLYPALEHLTKALKVKEEAFKDIIKIGRTHTQDATPVTLGQEFSGYRAALEYARHRLEQSLADVFLLAQGGTAVGTGLNAPVGFDKGFAEAVSEITGLSFKTAPNKFEALASHGAVLNFHGSLNALAADLFKIANDIRFLGSGPRSGLGELSLPENEPGSSIMPGKVNPTQAEAMTMVATQVFGNQTAVTVAASQGHFELNVFKPVIAYNVLQSIRLLSDTMVSFADHCVEGIEPNTARIKELLERSLMLVTALAPAIGYDNAARIAKTAHKNGTTLREEALASGLVSEEDYDRLVRAERMIAPQ</sequence>
<keyword id="KW-0963">Cytoplasm</keyword>
<keyword id="KW-0456">Lyase</keyword>
<keyword id="KW-0816">Tricarboxylic acid cycle</keyword>
<dbReference type="EC" id="4.2.1.2" evidence="1"/>
<dbReference type="EMBL" id="AE008918">
    <property type="protein sequence ID" value="AAL54293.1"/>
    <property type="status" value="ALT_INIT"/>
    <property type="molecule type" value="Genomic_DNA"/>
</dbReference>
<dbReference type="PIR" id="AB3641">
    <property type="entry name" value="AB3641"/>
</dbReference>
<dbReference type="RefSeq" id="WP_002966390.1">
    <property type="nucleotide sequence ID" value="NZ_GG703779.1"/>
</dbReference>
<dbReference type="SMR" id="Q8YB50"/>
<dbReference type="IntAct" id="Q8YB50">
    <property type="interactions" value="1"/>
</dbReference>
<dbReference type="GeneID" id="97535616"/>
<dbReference type="KEGG" id="bme:BMEII1051"/>
<dbReference type="KEGG" id="bmel:DK63_2207"/>
<dbReference type="PATRIC" id="fig|224914.52.peg.2312"/>
<dbReference type="eggNOG" id="COG0114">
    <property type="taxonomic scope" value="Bacteria"/>
</dbReference>
<dbReference type="PhylomeDB" id="Q8YB50"/>
<dbReference type="UniPathway" id="UPA00223">
    <property type="reaction ID" value="UER01007"/>
</dbReference>
<dbReference type="Proteomes" id="UP000000419">
    <property type="component" value="Chromosome II"/>
</dbReference>
<dbReference type="GO" id="GO:0005737">
    <property type="term" value="C:cytoplasm"/>
    <property type="evidence" value="ECO:0007669"/>
    <property type="project" value="UniProtKB-SubCell"/>
</dbReference>
<dbReference type="GO" id="GO:0004333">
    <property type="term" value="F:fumarate hydratase activity"/>
    <property type="evidence" value="ECO:0007669"/>
    <property type="project" value="UniProtKB-UniRule"/>
</dbReference>
<dbReference type="GO" id="GO:0006106">
    <property type="term" value="P:fumarate metabolic process"/>
    <property type="evidence" value="ECO:0007669"/>
    <property type="project" value="InterPro"/>
</dbReference>
<dbReference type="GO" id="GO:0006108">
    <property type="term" value="P:malate metabolic process"/>
    <property type="evidence" value="ECO:0007669"/>
    <property type="project" value="TreeGrafter"/>
</dbReference>
<dbReference type="GO" id="GO:0006099">
    <property type="term" value="P:tricarboxylic acid cycle"/>
    <property type="evidence" value="ECO:0007669"/>
    <property type="project" value="UniProtKB-UniRule"/>
</dbReference>
<dbReference type="CDD" id="cd01362">
    <property type="entry name" value="Fumarase_classII"/>
    <property type="match status" value="1"/>
</dbReference>
<dbReference type="FunFam" id="1.10.40.30:FF:000002">
    <property type="entry name" value="Fumarate hydratase class II"/>
    <property type="match status" value="1"/>
</dbReference>
<dbReference type="FunFam" id="1.10.275.10:FF:000001">
    <property type="entry name" value="Fumarate hydratase, mitochondrial"/>
    <property type="match status" value="1"/>
</dbReference>
<dbReference type="FunFam" id="1.20.200.10:FF:000001">
    <property type="entry name" value="Fumarate hydratase, mitochondrial"/>
    <property type="match status" value="1"/>
</dbReference>
<dbReference type="Gene3D" id="1.10.40.30">
    <property type="entry name" value="Fumarase/aspartase (C-terminal domain)"/>
    <property type="match status" value="1"/>
</dbReference>
<dbReference type="Gene3D" id="1.20.200.10">
    <property type="entry name" value="Fumarase/aspartase (Central domain)"/>
    <property type="match status" value="1"/>
</dbReference>
<dbReference type="Gene3D" id="1.10.275.10">
    <property type="entry name" value="Fumarase/aspartase (N-terminal domain)"/>
    <property type="match status" value="1"/>
</dbReference>
<dbReference type="HAMAP" id="MF_00743">
    <property type="entry name" value="FumaraseC"/>
    <property type="match status" value="1"/>
</dbReference>
<dbReference type="InterPro" id="IPR005677">
    <property type="entry name" value="Fum_hydII"/>
</dbReference>
<dbReference type="InterPro" id="IPR024083">
    <property type="entry name" value="Fumarase/histidase_N"/>
</dbReference>
<dbReference type="InterPro" id="IPR018951">
    <property type="entry name" value="Fumarase_C_C"/>
</dbReference>
<dbReference type="InterPro" id="IPR020557">
    <property type="entry name" value="Fumarate_lyase_CS"/>
</dbReference>
<dbReference type="InterPro" id="IPR000362">
    <property type="entry name" value="Fumarate_lyase_fam"/>
</dbReference>
<dbReference type="InterPro" id="IPR022761">
    <property type="entry name" value="Fumarate_lyase_N"/>
</dbReference>
<dbReference type="InterPro" id="IPR008948">
    <property type="entry name" value="L-Aspartase-like"/>
</dbReference>
<dbReference type="NCBIfam" id="TIGR00979">
    <property type="entry name" value="fumC_II"/>
    <property type="match status" value="1"/>
</dbReference>
<dbReference type="NCBIfam" id="NF008909">
    <property type="entry name" value="PRK12273.1"/>
    <property type="match status" value="1"/>
</dbReference>
<dbReference type="PANTHER" id="PTHR11444">
    <property type="entry name" value="ASPARTATEAMMONIA/ARGININOSUCCINATE/ADENYLOSUCCINATE LYASE"/>
    <property type="match status" value="1"/>
</dbReference>
<dbReference type="PANTHER" id="PTHR11444:SF1">
    <property type="entry name" value="FUMARATE HYDRATASE, MITOCHONDRIAL"/>
    <property type="match status" value="1"/>
</dbReference>
<dbReference type="Pfam" id="PF10415">
    <property type="entry name" value="FumaraseC_C"/>
    <property type="match status" value="1"/>
</dbReference>
<dbReference type="Pfam" id="PF00206">
    <property type="entry name" value="Lyase_1"/>
    <property type="match status" value="1"/>
</dbReference>
<dbReference type="PRINTS" id="PR00145">
    <property type="entry name" value="ARGSUCLYASE"/>
</dbReference>
<dbReference type="PRINTS" id="PR00149">
    <property type="entry name" value="FUMRATELYASE"/>
</dbReference>
<dbReference type="SUPFAM" id="SSF48557">
    <property type="entry name" value="L-aspartase-like"/>
    <property type="match status" value="1"/>
</dbReference>
<dbReference type="PROSITE" id="PS00163">
    <property type="entry name" value="FUMARATE_LYASES"/>
    <property type="match status" value="1"/>
</dbReference>
<feature type="chain" id="PRO_0000161261" description="Fumarate hydratase class II">
    <location>
        <begin position="1"/>
        <end position="463"/>
    </location>
</feature>
<feature type="active site" description="Proton donor/acceptor" evidence="1">
    <location>
        <position position="188"/>
    </location>
</feature>
<feature type="active site" evidence="1">
    <location>
        <position position="318"/>
    </location>
</feature>
<feature type="binding site" evidence="1">
    <location>
        <begin position="98"/>
        <end position="100"/>
    </location>
    <ligand>
        <name>substrate</name>
    </ligand>
</feature>
<feature type="binding site" description="in site B" evidence="1">
    <location>
        <begin position="129"/>
        <end position="132"/>
    </location>
    <ligand>
        <name>substrate</name>
    </ligand>
</feature>
<feature type="binding site" evidence="1">
    <location>
        <begin position="139"/>
        <end position="141"/>
    </location>
    <ligand>
        <name>substrate</name>
    </ligand>
</feature>
<feature type="binding site" evidence="1">
    <location>
        <position position="187"/>
    </location>
    <ligand>
        <name>substrate</name>
    </ligand>
</feature>
<feature type="binding site" evidence="1">
    <location>
        <position position="319"/>
    </location>
    <ligand>
        <name>substrate</name>
    </ligand>
</feature>
<feature type="binding site" evidence="1">
    <location>
        <begin position="324"/>
        <end position="326"/>
    </location>
    <ligand>
        <name>substrate</name>
    </ligand>
</feature>
<feature type="site" description="Important for catalytic activity" evidence="1">
    <location>
        <position position="331"/>
    </location>
</feature>